<evidence type="ECO:0000255" key="1">
    <source>
        <dbReference type="HAMAP-Rule" id="MF_00091"/>
    </source>
</evidence>
<sequence>MPLLDSFTVDHTRMAAPAVRVAKTMQTPNKDTITVFDLRFCVPNQEILSERGIHTLEHLFAGFMRDHLNGNGVEIIDISPMGCRTGFYMSLIGAPDEARVGAAWQAAMSDVLTVQEQGKIPELNEYQCGTYSMHSLEEAHAIARHVLERGIGVNRNDELALPEEKLKSL</sequence>
<organism>
    <name type="scientific">Aeromonas hydrophila subsp. hydrophila (strain ATCC 7966 / DSM 30187 / BCRC 13018 / CCUG 14551 / JCM 1027 / KCTC 2358 / NCIMB 9240 / NCTC 8049)</name>
    <dbReference type="NCBI Taxonomy" id="380703"/>
    <lineage>
        <taxon>Bacteria</taxon>
        <taxon>Pseudomonadati</taxon>
        <taxon>Pseudomonadota</taxon>
        <taxon>Gammaproteobacteria</taxon>
        <taxon>Aeromonadales</taxon>
        <taxon>Aeromonadaceae</taxon>
        <taxon>Aeromonas</taxon>
    </lineage>
</organism>
<name>LUXS_AERHH</name>
<proteinExistence type="inferred from homology"/>
<protein>
    <recommendedName>
        <fullName evidence="1">S-ribosylhomocysteine lyase</fullName>
        <ecNumber evidence="1">4.4.1.21</ecNumber>
    </recommendedName>
    <alternativeName>
        <fullName evidence="1">AI-2 synthesis protein</fullName>
    </alternativeName>
    <alternativeName>
        <fullName evidence="1">Autoinducer-2 production protein LuxS</fullName>
    </alternativeName>
</protein>
<comment type="function">
    <text evidence="1">Involved in the synthesis of autoinducer 2 (AI-2) which is secreted by bacteria and is used to communicate both the cell density and the metabolic potential of the environment. The regulation of gene expression in response to changes in cell density is called quorum sensing. Catalyzes the transformation of S-ribosylhomocysteine (RHC) to homocysteine (HC) and 4,5-dihydroxy-2,3-pentadione (DPD).</text>
</comment>
<comment type="catalytic activity">
    <reaction evidence="1">
        <text>S-(5-deoxy-D-ribos-5-yl)-L-homocysteine = (S)-4,5-dihydroxypentane-2,3-dione + L-homocysteine</text>
        <dbReference type="Rhea" id="RHEA:17753"/>
        <dbReference type="ChEBI" id="CHEBI:29484"/>
        <dbReference type="ChEBI" id="CHEBI:58195"/>
        <dbReference type="ChEBI" id="CHEBI:58199"/>
        <dbReference type="EC" id="4.4.1.21"/>
    </reaction>
</comment>
<comment type="cofactor">
    <cofactor evidence="1">
        <name>Fe cation</name>
        <dbReference type="ChEBI" id="CHEBI:24875"/>
    </cofactor>
    <text evidence="1">Binds 1 Fe cation per subunit.</text>
</comment>
<comment type="subunit">
    <text evidence="1">Homodimer.</text>
</comment>
<comment type="similarity">
    <text evidence="1">Belongs to the LuxS family.</text>
</comment>
<feature type="chain" id="PRO_0000297980" description="S-ribosylhomocysteine lyase">
    <location>
        <begin position="1"/>
        <end position="169"/>
    </location>
</feature>
<feature type="binding site" evidence="1">
    <location>
        <position position="54"/>
    </location>
    <ligand>
        <name>Fe cation</name>
        <dbReference type="ChEBI" id="CHEBI:24875"/>
    </ligand>
</feature>
<feature type="binding site" evidence="1">
    <location>
        <position position="58"/>
    </location>
    <ligand>
        <name>Fe cation</name>
        <dbReference type="ChEBI" id="CHEBI:24875"/>
    </ligand>
</feature>
<feature type="binding site" evidence="1">
    <location>
        <position position="128"/>
    </location>
    <ligand>
        <name>Fe cation</name>
        <dbReference type="ChEBI" id="CHEBI:24875"/>
    </ligand>
</feature>
<accession>A0KG57</accession>
<gene>
    <name evidence="1" type="primary">luxS</name>
    <name type="ordered locus">AHA_0700</name>
</gene>
<reference key="1">
    <citation type="journal article" date="2006" name="J. Bacteriol.">
        <title>Genome sequence of Aeromonas hydrophila ATCC 7966T: jack of all trades.</title>
        <authorList>
            <person name="Seshadri R."/>
            <person name="Joseph S.W."/>
            <person name="Chopra A.K."/>
            <person name="Sha J."/>
            <person name="Shaw J."/>
            <person name="Graf J."/>
            <person name="Haft D.H."/>
            <person name="Wu M."/>
            <person name="Ren Q."/>
            <person name="Rosovitz M.J."/>
            <person name="Madupu R."/>
            <person name="Tallon L."/>
            <person name="Kim M."/>
            <person name="Jin S."/>
            <person name="Vuong H."/>
            <person name="Stine O.C."/>
            <person name="Ali A."/>
            <person name="Horneman A.J."/>
            <person name="Heidelberg J.F."/>
        </authorList>
    </citation>
    <scope>NUCLEOTIDE SEQUENCE [LARGE SCALE GENOMIC DNA]</scope>
    <source>
        <strain>ATCC 7966 / DSM 30187 / BCRC 13018 / CCUG 14551 / JCM 1027 / KCTC 2358 / NCIMB 9240 / NCTC 8049</strain>
    </source>
</reference>
<keyword id="KW-0071">Autoinducer synthesis</keyword>
<keyword id="KW-0408">Iron</keyword>
<keyword id="KW-0456">Lyase</keyword>
<keyword id="KW-0479">Metal-binding</keyword>
<keyword id="KW-0673">Quorum sensing</keyword>
<keyword id="KW-1185">Reference proteome</keyword>
<dbReference type="EC" id="4.4.1.21" evidence="1"/>
<dbReference type="EMBL" id="CP000462">
    <property type="protein sequence ID" value="ABK38869.1"/>
    <property type="molecule type" value="Genomic_DNA"/>
</dbReference>
<dbReference type="RefSeq" id="WP_011704660.1">
    <property type="nucleotide sequence ID" value="NC_008570.1"/>
</dbReference>
<dbReference type="RefSeq" id="YP_855242.1">
    <property type="nucleotide sequence ID" value="NC_008570.1"/>
</dbReference>
<dbReference type="SMR" id="A0KG57"/>
<dbReference type="STRING" id="380703.AHA_0700"/>
<dbReference type="EnsemblBacteria" id="ABK38869">
    <property type="protein sequence ID" value="ABK38869"/>
    <property type="gene ID" value="AHA_0700"/>
</dbReference>
<dbReference type="GeneID" id="47843976"/>
<dbReference type="KEGG" id="aha:AHA_0700"/>
<dbReference type="PATRIC" id="fig|380703.7.peg.702"/>
<dbReference type="eggNOG" id="COG1854">
    <property type="taxonomic scope" value="Bacteria"/>
</dbReference>
<dbReference type="HOGENOM" id="CLU_107531_2_0_6"/>
<dbReference type="OrthoDB" id="9788129at2"/>
<dbReference type="Proteomes" id="UP000000756">
    <property type="component" value="Chromosome"/>
</dbReference>
<dbReference type="GO" id="GO:0005506">
    <property type="term" value="F:iron ion binding"/>
    <property type="evidence" value="ECO:0007669"/>
    <property type="project" value="InterPro"/>
</dbReference>
<dbReference type="GO" id="GO:0043768">
    <property type="term" value="F:S-ribosylhomocysteine lyase activity"/>
    <property type="evidence" value="ECO:0007669"/>
    <property type="project" value="UniProtKB-UniRule"/>
</dbReference>
<dbReference type="GO" id="GO:0009372">
    <property type="term" value="P:quorum sensing"/>
    <property type="evidence" value="ECO:0007669"/>
    <property type="project" value="UniProtKB-UniRule"/>
</dbReference>
<dbReference type="FunFam" id="3.30.1360.80:FF:000001">
    <property type="entry name" value="S-ribosylhomocysteine lyase"/>
    <property type="match status" value="1"/>
</dbReference>
<dbReference type="Gene3D" id="3.30.1360.80">
    <property type="entry name" value="S-ribosylhomocysteinase (LuxS)"/>
    <property type="match status" value="1"/>
</dbReference>
<dbReference type="HAMAP" id="MF_00091">
    <property type="entry name" value="LuxS"/>
    <property type="match status" value="1"/>
</dbReference>
<dbReference type="InterPro" id="IPR037005">
    <property type="entry name" value="LuxS_sf"/>
</dbReference>
<dbReference type="InterPro" id="IPR011249">
    <property type="entry name" value="Metalloenz_LuxS/M16"/>
</dbReference>
<dbReference type="InterPro" id="IPR003815">
    <property type="entry name" value="S-ribosylhomocysteinase"/>
</dbReference>
<dbReference type="NCBIfam" id="NF002602">
    <property type="entry name" value="PRK02260.1-2"/>
    <property type="match status" value="1"/>
</dbReference>
<dbReference type="PANTHER" id="PTHR35799">
    <property type="entry name" value="S-RIBOSYLHOMOCYSTEINE LYASE"/>
    <property type="match status" value="1"/>
</dbReference>
<dbReference type="PANTHER" id="PTHR35799:SF1">
    <property type="entry name" value="S-RIBOSYLHOMOCYSTEINE LYASE"/>
    <property type="match status" value="1"/>
</dbReference>
<dbReference type="Pfam" id="PF02664">
    <property type="entry name" value="LuxS"/>
    <property type="match status" value="1"/>
</dbReference>
<dbReference type="PIRSF" id="PIRSF006160">
    <property type="entry name" value="AI2"/>
    <property type="match status" value="1"/>
</dbReference>
<dbReference type="PRINTS" id="PR01487">
    <property type="entry name" value="LUXSPROTEIN"/>
</dbReference>
<dbReference type="SUPFAM" id="SSF63411">
    <property type="entry name" value="LuxS/MPP-like metallohydrolase"/>
    <property type="match status" value="1"/>
</dbReference>